<dbReference type="SMR" id="F7ARS3"/>
<dbReference type="STRING" id="13616.ENSMODP00000052620"/>
<dbReference type="KEGG" id="mdo:100009821"/>
<dbReference type="eggNOG" id="KOG3454">
    <property type="taxonomic scope" value="Eukaryota"/>
</dbReference>
<dbReference type="HOGENOM" id="CLU_079697_3_1_1"/>
<dbReference type="InParanoid" id="F7ARS3"/>
<dbReference type="OrthoDB" id="76567at2759"/>
<dbReference type="TreeFam" id="TF313578"/>
<dbReference type="Proteomes" id="UP000002280">
    <property type="component" value="Unplaced"/>
</dbReference>
<dbReference type="GO" id="GO:0000243">
    <property type="term" value="C:commitment complex"/>
    <property type="evidence" value="ECO:0007669"/>
    <property type="project" value="UniProtKB-UniRule"/>
</dbReference>
<dbReference type="GO" id="GO:0005685">
    <property type="term" value="C:U1 snRNP"/>
    <property type="evidence" value="ECO:0000250"/>
    <property type="project" value="UniProtKB"/>
</dbReference>
<dbReference type="GO" id="GO:0071004">
    <property type="term" value="C:U2-type prespliceosome"/>
    <property type="evidence" value="ECO:0007669"/>
    <property type="project" value="UniProtKB-UniRule"/>
</dbReference>
<dbReference type="GO" id="GO:0003729">
    <property type="term" value="F:mRNA binding"/>
    <property type="evidence" value="ECO:0007669"/>
    <property type="project" value="UniProtKB-UniRule"/>
</dbReference>
<dbReference type="GO" id="GO:0030627">
    <property type="term" value="F:pre-mRNA 5'-splice site binding"/>
    <property type="evidence" value="ECO:0000318"/>
    <property type="project" value="GO_Central"/>
</dbReference>
<dbReference type="GO" id="GO:0030619">
    <property type="term" value="F:U1 snRNA binding"/>
    <property type="evidence" value="ECO:0007669"/>
    <property type="project" value="UniProtKB-UniRule"/>
</dbReference>
<dbReference type="GO" id="GO:0008270">
    <property type="term" value="F:zinc ion binding"/>
    <property type="evidence" value="ECO:0007669"/>
    <property type="project" value="UniProtKB-UniRule"/>
</dbReference>
<dbReference type="GO" id="GO:0000395">
    <property type="term" value="P:mRNA 5'-splice site recognition"/>
    <property type="evidence" value="ECO:0000318"/>
    <property type="project" value="GO_Central"/>
</dbReference>
<dbReference type="GO" id="GO:0000387">
    <property type="term" value="P:spliceosomal snRNP assembly"/>
    <property type="evidence" value="ECO:0007669"/>
    <property type="project" value="UniProtKB-UniRule"/>
</dbReference>
<dbReference type="FunFam" id="3.30.160.60:FF:000059">
    <property type="entry name" value="U1 small nuclear ribonucleoprotein C"/>
    <property type="match status" value="1"/>
</dbReference>
<dbReference type="Gene3D" id="3.30.160.60">
    <property type="entry name" value="Classic Zinc Finger"/>
    <property type="match status" value="1"/>
</dbReference>
<dbReference type="HAMAP" id="MF_03153">
    <property type="entry name" value="U1_C"/>
    <property type="match status" value="1"/>
</dbReference>
<dbReference type="InterPro" id="IPR000690">
    <property type="entry name" value="Matrin/U1-C_Znf_C2H2"/>
</dbReference>
<dbReference type="InterPro" id="IPR003604">
    <property type="entry name" value="Matrin/U1-like-C_Znf_C2H2"/>
</dbReference>
<dbReference type="InterPro" id="IPR013085">
    <property type="entry name" value="U1-CZ_Znf_C2H2"/>
</dbReference>
<dbReference type="InterPro" id="IPR017340">
    <property type="entry name" value="U1_snRNP-C"/>
</dbReference>
<dbReference type="InterPro" id="IPR036236">
    <property type="entry name" value="Znf_C2H2_sf"/>
</dbReference>
<dbReference type="PANTHER" id="PTHR31148">
    <property type="entry name" value="U1 SMALL NUCLEAR RIBONUCLEOPROTEIN C"/>
    <property type="match status" value="1"/>
</dbReference>
<dbReference type="PANTHER" id="PTHR31148:SF1">
    <property type="entry name" value="U1 SMALL NUCLEAR RIBONUCLEOPROTEIN C"/>
    <property type="match status" value="1"/>
</dbReference>
<dbReference type="Pfam" id="PF06220">
    <property type="entry name" value="zf-U1"/>
    <property type="match status" value="1"/>
</dbReference>
<dbReference type="PIRSF" id="PIRSF037969">
    <property type="entry name" value="U1_snRNP-C"/>
    <property type="match status" value="1"/>
</dbReference>
<dbReference type="SMART" id="SM00451">
    <property type="entry name" value="ZnF_U1"/>
    <property type="match status" value="1"/>
</dbReference>
<dbReference type="SUPFAM" id="SSF57667">
    <property type="entry name" value="beta-beta-alpha zinc fingers"/>
    <property type="match status" value="1"/>
</dbReference>
<dbReference type="PROSITE" id="PS50171">
    <property type="entry name" value="ZF_MATRIN"/>
    <property type="match status" value="1"/>
</dbReference>
<accession>F7ARS3</accession>
<sequence length="138" mass="15559">MPKFYCDYCDTYLTHDSPSVRKTHCSGRKHKENVRDYYQKWMEEQAQSLIDKTTTAFQQGRIPPNLFSAPPLGGPMIPPPHPSMMGPPPPGMMPVGPPPGMRMPMGGHMPMMPGPPMMRPLPHPMMVPTRPVMPRPDR</sequence>
<feature type="chain" id="PRO_0000414251" description="U1 small nuclear ribonucleoprotein C">
    <location>
        <begin position="1"/>
        <end position="138"/>
    </location>
</feature>
<feature type="zinc finger region" description="Matrin-type" evidence="2">
    <location>
        <begin position="4"/>
        <end position="36"/>
    </location>
</feature>
<feature type="region of interest" description="Disordered" evidence="3">
    <location>
        <begin position="62"/>
        <end position="99"/>
    </location>
</feature>
<feature type="compositionally biased region" description="Pro residues" evidence="3">
    <location>
        <begin position="72"/>
        <end position="99"/>
    </location>
</feature>
<feature type="modified residue" description="Phosphotyrosine" evidence="1">
    <location>
        <position position="8"/>
    </location>
</feature>
<feature type="modified residue" description="Phosphoserine" evidence="1">
    <location>
        <position position="17"/>
    </location>
</feature>
<feature type="modified residue" description="N6-acetyllysine" evidence="1">
    <location>
        <position position="52"/>
    </location>
</feature>
<keyword id="KW-0007">Acetylation</keyword>
<keyword id="KW-0479">Metal-binding</keyword>
<keyword id="KW-0539">Nucleus</keyword>
<keyword id="KW-0597">Phosphoprotein</keyword>
<keyword id="KW-1185">Reference proteome</keyword>
<keyword id="KW-0687">Ribonucleoprotein</keyword>
<keyword id="KW-0694">RNA-binding</keyword>
<keyword id="KW-0862">Zinc</keyword>
<keyword id="KW-0863">Zinc-finger</keyword>
<organism>
    <name type="scientific">Monodelphis domestica</name>
    <name type="common">Gray short-tailed opossum</name>
    <dbReference type="NCBI Taxonomy" id="13616"/>
    <lineage>
        <taxon>Eukaryota</taxon>
        <taxon>Metazoa</taxon>
        <taxon>Chordata</taxon>
        <taxon>Craniata</taxon>
        <taxon>Vertebrata</taxon>
        <taxon>Euteleostomi</taxon>
        <taxon>Mammalia</taxon>
        <taxon>Metatheria</taxon>
        <taxon>Didelphimorphia</taxon>
        <taxon>Didelphidae</taxon>
        <taxon>Monodelphis</taxon>
    </lineage>
</organism>
<protein>
    <recommendedName>
        <fullName evidence="2">U1 small nuclear ribonucleoprotein C</fullName>
        <shortName evidence="2">U1 snRNP C</shortName>
        <shortName evidence="2">U1-C</shortName>
        <shortName evidence="2">U1C</shortName>
    </recommendedName>
</protein>
<evidence type="ECO:0000250" key="1">
    <source>
        <dbReference type="UniProtKB" id="P09234"/>
    </source>
</evidence>
<evidence type="ECO:0000255" key="2">
    <source>
        <dbReference type="HAMAP-Rule" id="MF_03153"/>
    </source>
</evidence>
<evidence type="ECO:0000256" key="3">
    <source>
        <dbReference type="SAM" id="MobiDB-lite"/>
    </source>
</evidence>
<reference key="1">
    <citation type="journal article" date="2007" name="Nature">
        <title>Genome of the marsupial Monodelphis domestica reveals innovation in non-coding sequences.</title>
        <authorList>
            <person name="Mikkelsen T.S."/>
            <person name="Wakefield M.J."/>
            <person name="Aken B."/>
            <person name="Amemiya C.T."/>
            <person name="Chang J.L."/>
            <person name="Duke S."/>
            <person name="Garber M."/>
            <person name="Gentles A.J."/>
            <person name="Goodstadt L."/>
            <person name="Heger A."/>
            <person name="Jurka J."/>
            <person name="Kamal M."/>
            <person name="Mauceli E."/>
            <person name="Searle S.M."/>
            <person name="Sharpe T."/>
            <person name="Baker M.L."/>
            <person name="Batzer M.A."/>
            <person name="Benos P.V."/>
            <person name="Belov K."/>
            <person name="Clamp M."/>
            <person name="Cook A."/>
            <person name="Cuff J."/>
            <person name="Das R."/>
            <person name="Davidow L."/>
            <person name="Deakin J.E."/>
            <person name="Fazzari M.J."/>
            <person name="Glass J.L."/>
            <person name="Grabherr M."/>
            <person name="Greally J.M."/>
            <person name="Gu W."/>
            <person name="Hore T.A."/>
            <person name="Huttley G.A."/>
            <person name="Kleber M."/>
            <person name="Jirtle R.L."/>
            <person name="Koina E."/>
            <person name="Lee J.T."/>
            <person name="Mahony S."/>
            <person name="Marra M.A."/>
            <person name="Miller R.D."/>
            <person name="Nicholls R.D."/>
            <person name="Oda M."/>
            <person name="Papenfuss A.T."/>
            <person name="Parra Z.E."/>
            <person name="Pollock D.D."/>
            <person name="Ray D.A."/>
            <person name="Schein J.E."/>
            <person name="Speed T.P."/>
            <person name="Thompson K."/>
            <person name="VandeBerg J.L."/>
            <person name="Wade C.M."/>
            <person name="Walker J.A."/>
            <person name="Waters P.D."/>
            <person name="Webber C."/>
            <person name="Weidman J.R."/>
            <person name="Xie X."/>
            <person name="Zody M.C."/>
            <person name="Baldwin J."/>
            <person name="Abdouelleil A."/>
            <person name="Abdulkadir J."/>
            <person name="Abebe A."/>
            <person name="Abera B."/>
            <person name="Abreu J."/>
            <person name="Acer S.C."/>
            <person name="Aftuck L."/>
            <person name="Alexander A."/>
            <person name="An P."/>
            <person name="Anderson E."/>
            <person name="Anderson S."/>
            <person name="Arachi H."/>
            <person name="Azer M."/>
            <person name="Bachantsang P."/>
            <person name="Barry A."/>
            <person name="Bayul T."/>
            <person name="Berlin A."/>
            <person name="Bessette D."/>
            <person name="Bloom T."/>
            <person name="Bloom T."/>
            <person name="Boguslavskiy L."/>
            <person name="Bonnet C."/>
            <person name="Boukhgalter B."/>
            <person name="Bourzgui I."/>
            <person name="Brown A."/>
            <person name="Cahill P."/>
            <person name="Channer S."/>
            <person name="Cheshatsang Y."/>
            <person name="Chuda L."/>
            <person name="Citroen M."/>
            <person name="Collymore A."/>
            <person name="Cooke P."/>
            <person name="Costello M."/>
            <person name="D'Aco K."/>
            <person name="Daza R."/>
            <person name="De Haan G."/>
            <person name="DeGray S."/>
            <person name="DeMaso C."/>
            <person name="Dhargay N."/>
            <person name="Dooley K."/>
            <person name="Dooley E."/>
            <person name="Doricent M."/>
            <person name="Dorje P."/>
            <person name="Dorjee K."/>
            <person name="Dupes A."/>
            <person name="Elong R."/>
            <person name="Falk J."/>
            <person name="Farina A."/>
            <person name="Faro S."/>
            <person name="Ferguson D."/>
            <person name="Fisher S."/>
            <person name="Foley C.D."/>
            <person name="Franke A."/>
            <person name="Friedrich D."/>
            <person name="Gadbois L."/>
            <person name="Gearin G."/>
            <person name="Gearin C.R."/>
            <person name="Giannoukos G."/>
            <person name="Goode T."/>
            <person name="Graham J."/>
            <person name="Grandbois E."/>
            <person name="Grewal S."/>
            <person name="Gyaltsen K."/>
            <person name="Hafez N."/>
            <person name="Hagos B."/>
            <person name="Hall J."/>
            <person name="Henson C."/>
            <person name="Hollinger A."/>
            <person name="Honan T."/>
            <person name="Huard M.D."/>
            <person name="Hughes L."/>
            <person name="Hurhula B."/>
            <person name="Husby M.E."/>
            <person name="Kamat A."/>
            <person name="Kanga B."/>
            <person name="Kashin S."/>
            <person name="Khazanovich D."/>
            <person name="Kisner P."/>
            <person name="Lance K."/>
            <person name="Lara M."/>
            <person name="Lee W."/>
            <person name="Lennon N."/>
            <person name="Letendre F."/>
            <person name="LeVine R."/>
            <person name="Lipovsky A."/>
            <person name="Liu X."/>
            <person name="Liu J."/>
            <person name="Liu S."/>
            <person name="Lokyitsang T."/>
            <person name="Lokyitsang Y."/>
            <person name="Lubonja R."/>
            <person name="Lui A."/>
            <person name="MacDonald P."/>
            <person name="Magnisalis V."/>
            <person name="Maru K."/>
            <person name="Matthews C."/>
            <person name="McCusker W."/>
            <person name="McDonough S."/>
            <person name="Mehta T."/>
            <person name="Meldrim J."/>
            <person name="Meneus L."/>
            <person name="Mihai O."/>
            <person name="Mihalev A."/>
            <person name="Mihova T."/>
            <person name="Mittelman R."/>
            <person name="Mlenga V."/>
            <person name="Montmayeur A."/>
            <person name="Mulrain L."/>
            <person name="Navidi A."/>
            <person name="Naylor J."/>
            <person name="Negash T."/>
            <person name="Nguyen T."/>
            <person name="Nguyen N."/>
            <person name="Nicol R."/>
            <person name="Norbu C."/>
            <person name="Norbu N."/>
            <person name="Novod N."/>
            <person name="O'Neill B."/>
            <person name="Osman S."/>
            <person name="Markiewicz E."/>
            <person name="Oyono O.L."/>
            <person name="Patti C."/>
            <person name="Phunkhang P."/>
            <person name="Pierre F."/>
            <person name="Priest M."/>
            <person name="Raghuraman S."/>
            <person name="Rege F."/>
            <person name="Reyes R."/>
            <person name="Rise C."/>
            <person name="Rogov P."/>
            <person name="Ross K."/>
            <person name="Ryan E."/>
            <person name="Settipalli S."/>
            <person name="Shea T."/>
            <person name="Sherpa N."/>
            <person name="Shi L."/>
            <person name="Shih D."/>
            <person name="Sparrow T."/>
            <person name="Spaulding J."/>
            <person name="Stalker J."/>
            <person name="Stange-Thomann N."/>
            <person name="Stavropoulos S."/>
            <person name="Stone C."/>
            <person name="Strader C."/>
            <person name="Tesfaye S."/>
            <person name="Thomson T."/>
            <person name="Thoulutsang Y."/>
            <person name="Thoulutsang D."/>
            <person name="Topham K."/>
            <person name="Topping I."/>
            <person name="Tsamla T."/>
            <person name="Vassiliev H."/>
            <person name="Vo A."/>
            <person name="Wangchuk T."/>
            <person name="Wangdi T."/>
            <person name="Weiand M."/>
            <person name="Wilkinson J."/>
            <person name="Wilson A."/>
            <person name="Yadav S."/>
            <person name="Young G."/>
            <person name="Yu Q."/>
            <person name="Zembek L."/>
            <person name="Zhong D."/>
            <person name="Zimmer A."/>
            <person name="Zwirko Z."/>
            <person name="Jaffe D.B."/>
            <person name="Alvarez P."/>
            <person name="Brockman W."/>
            <person name="Butler J."/>
            <person name="Chin C."/>
            <person name="Gnerre S."/>
            <person name="MacCallum I."/>
            <person name="Graves J.A."/>
            <person name="Ponting C.P."/>
            <person name="Breen M."/>
            <person name="Samollow P.B."/>
            <person name="Lander E.S."/>
            <person name="Lindblad-Toh K."/>
        </authorList>
    </citation>
    <scope>NUCLEOTIDE SEQUENCE [LARGE SCALE GENOMIC DNA]</scope>
</reference>
<proteinExistence type="inferred from homology"/>
<name>RU1C_MONDO</name>
<comment type="function">
    <text evidence="2">Component of the spliceosomal U1 snRNP, which is essential for recognition of the pre-mRNA 5' splice-site and the subsequent assembly of the spliceosome. SNRPC/U1-C is directly involved in initial 5' splice-site recognition for both constitutive and regulated alternative splicing. The interaction with the 5' splice-site seems to precede base-pairing between the pre-mRNA and the U1 snRNA. Stimulates commitment or early (E) complex formation by stabilizing the base pairing of the 5' end of the U1 snRNA and the 5' splice-site region.</text>
</comment>
<comment type="subunit">
    <text evidence="1 2">Component of the U1 snRNP. The U1 snRNP is composed of the U1 snRNA and the 7 core Sm proteins SNRPB, SNRPD1, SNRPD2, SNRPD3, SNRPE, SNRPF and SNRPG that assemble in a heptameric protein ring on the Sm site of the small nuclear RNA to form the core snRNP, and at least 3 U1 snRNP-specific proteins SNRNP70/U1-70K, SNRPA/U1-A and SNRPC/U1-C. SNRPC/U1-C interacts with U1 snRNA and the 5' splice-site region of the pre-mRNA (By similarity). Interacts (via N-terminus) with TIA1 (via C-terminus); thereby promoting spliceosomal U1 snRNP recruitment to 5' splice sites (By similarity).</text>
</comment>
<comment type="subcellular location">
    <subcellularLocation>
        <location evidence="2">Nucleus</location>
    </subcellularLocation>
</comment>
<comment type="similarity">
    <text evidence="2">Belongs to the U1 small nuclear ribonucleoprotein C family.</text>
</comment>
<gene>
    <name evidence="2" type="primary">SNRPC</name>
</gene>